<comment type="function">
    <text evidence="1">Although this protein associates with the 30S subunit of the ribosome it is not considered to be a bona fide ribosomal protein.</text>
</comment>
<comment type="subunit">
    <text evidence="1">Associates exclusively with the 30S subunit; there is 0.1 copy per ribosome in the exponential phase and 0.4 copies per ribosome in the stationary phase.</text>
</comment>
<comment type="similarity">
    <text evidence="3">Belongs to the SRA family.</text>
</comment>
<evidence type="ECO:0000250" key="1"/>
<evidence type="ECO:0000256" key="2">
    <source>
        <dbReference type="SAM" id="MobiDB-lite"/>
    </source>
</evidence>
<evidence type="ECO:0000305" key="3"/>
<dbReference type="EMBL" id="AE017220">
    <property type="protein sequence ID" value="AAX65472.1"/>
    <property type="molecule type" value="Genomic_DNA"/>
</dbReference>
<dbReference type="RefSeq" id="WP_000841559.1">
    <property type="nucleotide sequence ID" value="NC_006905.1"/>
</dbReference>
<dbReference type="KEGG" id="sec:SCH_1566"/>
<dbReference type="HOGENOM" id="CLU_210948_0_0_6"/>
<dbReference type="Proteomes" id="UP000000538">
    <property type="component" value="Chromosome"/>
</dbReference>
<dbReference type="GO" id="GO:0006412">
    <property type="term" value="P:translation"/>
    <property type="evidence" value="ECO:0007669"/>
    <property type="project" value="InterPro"/>
</dbReference>
<dbReference type="InterPro" id="IPR012607">
    <property type="entry name" value="SRA-like"/>
</dbReference>
<dbReference type="NCBIfam" id="NF007473">
    <property type="entry name" value="PRK10057.1"/>
    <property type="match status" value="1"/>
</dbReference>
<dbReference type="Pfam" id="PF08136">
    <property type="entry name" value="SRA_like"/>
    <property type="match status" value="1"/>
</dbReference>
<name>SRA_SALCH</name>
<accession>Q57P89</accession>
<reference key="1">
    <citation type="journal article" date="2005" name="Nucleic Acids Res.">
        <title>The genome sequence of Salmonella enterica serovar Choleraesuis, a highly invasive and resistant zoonotic pathogen.</title>
        <authorList>
            <person name="Chiu C.-H."/>
            <person name="Tang P."/>
            <person name="Chu C."/>
            <person name="Hu S."/>
            <person name="Bao Q."/>
            <person name="Yu J."/>
            <person name="Chou Y.-Y."/>
            <person name="Wang H.-S."/>
            <person name="Lee Y.-S."/>
        </authorList>
    </citation>
    <scope>NUCLEOTIDE SEQUENCE [LARGE SCALE GENOMIC DNA]</scope>
    <source>
        <strain>SC-B67</strain>
    </source>
</reference>
<protein>
    <recommendedName>
        <fullName>Stationary-phase-induced ribosome-associated protein</fullName>
        <shortName>SRA</shortName>
    </recommendedName>
    <alternativeName>
        <fullName>30S ribosomal protein S22</fullName>
    </alternativeName>
</protein>
<sequence>MKSNRQARHILGLDYRISNQRKVVTEGDTSSVVNNPTGRKRRADSQK</sequence>
<feature type="chain" id="PRO_0000287576" description="Stationary-phase-induced ribosome-associated protein">
    <location>
        <begin position="1"/>
        <end position="47"/>
    </location>
</feature>
<feature type="region of interest" description="Disordered" evidence="2">
    <location>
        <begin position="23"/>
        <end position="47"/>
    </location>
</feature>
<feature type="compositionally biased region" description="Polar residues" evidence="2">
    <location>
        <begin position="23"/>
        <end position="37"/>
    </location>
</feature>
<feature type="compositionally biased region" description="Basic residues" evidence="2">
    <location>
        <begin position="38"/>
        <end position="47"/>
    </location>
</feature>
<proteinExistence type="inferred from homology"/>
<organism>
    <name type="scientific">Salmonella choleraesuis (strain SC-B67)</name>
    <dbReference type="NCBI Taxonomy" id="321314"/>
    <lineage>
        <taxon>Bacteria</taxon>
        <taxon>Pseudomonadati</taxon>
        <taxon>Pseudomonadota</taxon>
        <taxon>Gammaproteobacteria</taxon>
        <taxon>Enterobacterales</taxon>
        <taxon>Enterobacteriaceae</taxon>
        <taxon>Salmonella</taxon>
    </lineage>
</organism>
<gene>
    <name type="primary">sra</name>
    <name type="synonym">rpsV</name>
    <name type="ordered locus">SCH_1566</name>
</gene>